<sequence length="618" mass="67084">MDATYTMAQTPVQGQPSFAYYPTESQSRQQHFTSHPFEMQYYGQVSSYPQQQAQQQHSMPEQQPVYAAQPMLNMHQMATTNAFRGALSMTPIASPQPTHLKPTIIVQQDSPALMPLDTRFVSNDFYGFPSTPPLSTSGSTISSPPSSNGSLHTPINDCFFSFEKVEGVKEGCESDVHCELLANTDWSRSDSPPLTPVFIQPQSLTASQSSDLLSAQIPCPSLSPSPSPDSATFISHPQSILSAEPSGSDFCDPRQLTVESSVGAPAELPPLPTLSCNEEEPKVVLGSATVTLPVHEGLSPSFSSSSEDPLGSLPTFDSFSDLDSEDEFANKLVDFHPIGNTYFQGDKRQRLGTYLLDEDEFLSERSLEDLDDQEAFAQSGLPSVESTDFLAVEGDATQSTEEMSSKKRVTSRRSLKKASTSESSSDSLAKKTQASATSRSGHSDTTSTVQQSTASSRQNSTANTSNSESPAAPVSVNRRGRKQSLTDDPSKTFVCSLCSRRFRRQEHLKRHYRSLHTQDKPFECHECGKKFSRSDNLAQHARTHGGGSIVMGVIDTNSSNTQPAFDEPEPRALGLALYEAANAATSKSTTSESSDGTISDTSSVGGRPAKKRRRDDHV</sequence>
<dbReference type="EMBL" id="AAHF01000005">
    <property type="protein sequence ID" value="EAL89879.1"/>
    <property type="molecule type" value="Genomic_DNA"/>
</dbReference>
<dbReference type="RefSeq" id="XP_751917.1">
    <property type="nucleotide sequence ID" value="XM_746824.1"/>
</dbReference>
<dbReference type="SMR" id="Q4WPF5"/>
<dbReference type="STRING" id="330879.Q4WPF5"/>
<dbReference type="EnsemblFungi" id="EAL89879">
    <property type="protein sequence ID" value="EAL89879"/>
    <property type="gene ID" value="AFUA_4G09080"/>
</dbReference>
<dbReference type="GeneID" id="3509523"/>
<dbReference type="KEGG" id="afm:AFUA_4G09080"/>
<dbReference type="VEuPathDB" id="FungiDB:Afu4g09080"/>
<dbReference type="eggNOG" id="KOG1721">
    <property type="taxonomic scope" value="Eukaryota"/>
</dbReference>
<dbReference type="HOGENOM" id="CLU_030977_1_0_1"/>
<dbReference type="InParanoid" id="Q4WPF5"/>
<dbReference type="OMA" id="PFFYYNP"/>
<dbReference type="OrthoDB" id="654211at2759"/>
<dbReference type="Proteomes" id="UP000002530">
    <property type="component" value="Chromosome 4"/>
</dbReference>
<dbReference type="GO" id="GO:0005829">
    <property type="term" value="C:cytosol"/>
    <property type="evidence" value="ECO:0000314"/>
    <property type="project" value="AspGD"/>
</dbReference>
<dbReference type="GO" id="GO:0005634">
    <property type="term" value="C:nucleus"/>
    <property type="evidence" value="ECO:0000314"/>
    <property type="project" value="AspGD"/>
</dbReference>
<dbReference type="GO" id="GO:0000987">
    <property type="term" value="F:cis-regulatory region sequence-specific DNA binding"/>
    <property type="evidence" value="ECO:0000318"/>
    <property type="project" value="GO_Central"/>
</dbReference>
<dbReference type="GO" id="GO:0000981">
    <property type="term" value="F:DNA-binding transcription factor activity, RNA polymerase II-specific"/>
    <property type="evidence" value="ECO:0000318"/>
    <property type="project" value="GO_Central"/>
</dbReference>
<dbReference type="GO" id="GO:0000978">
    <property type="term" value="F:RNA polymerase II cis-regulatory region sequence-specific DNA binding"/>
    <property type="evidence" value="ECO:0007669"/>
    <property type="project" value="InterPro"/>
</dbReference>
<dbReference type="GO" id="GO:0008270">
    <property type="term" value="F:zinc ion binding"/>
    <property type="evidence" value="ECO:0007669"/>
    <property type="project" value="UniProtKB-KW"/>
</dbReference>
<dbReference type="GO" id="GO:0071277">
    <property type="term" value="P:cellular response to calcium ion"/>
    <property type="evidence" value="ECO:0000315"/>
    <property type="project" value="AspGD"/>
</dbReference>
<dbReference type="GO" id="GO:0034605">
    <property type="term" value="P:cellular response to heat"/>
    <property type="evidence" value="ECO:0000315"/>
    <property type="project" value="AspGD"/>
</dbReference>
<dbReference type="GO" id="GO:0034599">
    <property type="term" value="P:cellular response to oxidative stress"/>
    <property type="evidence" value="ECO:0000315"/>
    <property type="project" value="AspGD"/>
</dbReference>
<dbReference type="GO" id="GO:1900409">
    <property type="term" value="P:positive regulation of cellular response to oxidative stress"/>
    <property type="evidence" value="ECO:0000315"/>
    <property type="project" value="AspGD"/>
</dbReference>
<dbReference type="GO" id="GO:0042594">
    <property type="term" value="P:response to starvation"/>
    <property type="evidence" value="ECO:0000318"/>
    <property type="project" value="GO_Central"/>
</dbReference>
<dbReference type="FunFam" id="3.30.160.60:FF:000141">
    <property type="entry name" value="C2H2 zinc finger protein"/>
    <property type="match status" value="1"/>
</dbReference>
<dbReference type="FunFam" id="3.30.160.60:FF:000243">
    <property type="entry name" value="Probable transcription factor steA"/>
    <property type="match status" value="1"/>
</dbReference>
<dbReference type="Gene3D" id="3.30.160.60">
    <property type="entry name" value="Classic Zinc Finger"/>
    <property type="match status" value="2"/>
</dbReference>
<dbReference type="InterPro" id="IPR051059">
    <property type="entry name" value="VerF-like"/>
</dbReference>
<dbReference type="InterPro" id="IPR036236">
    <property type="entry name" value="Znf_C2H2_sf"/>
</dbReference>
<dbReference type="InterPro" id="IPR013087">
    <property type="entry name" value="Znf_C2H2_type"/>
</dbReference>
<dbReference type="PANTHER" id="PTHR40626">
    <property type="entry name" value="MIP31509P"/>
    <property type="match status" value="1"/>
</dbReference>
<dbReference type="PANTHER" id="PTHR40626:SF11">
    <property type="entry name" value="ZINC FINGER PROTEIN YPR022C"/>
    <property type="match status" value="1"/>
</dbReference>
<dbReference type="Pfam" id="PF00096">
    <property type="entry name" value="zf-C2H2"/>
    <property type="match status" value="2"/>
</dbReference>
<dbReference type="SMART" id="SM00355">
    <property type="entry name" value="ZnF_C2H2"/>
    <property type="match status" value="2"/>
</dbReference>
<dbReference type="SUPFAM" id="SSF57667">
    <property type="entry name" value="beta-beta-alpha zinc fingers"/>
    <property type="match status" value="1"/>
</dbReference>
<dbReference type="PROSITE" id="PS00028">
    <property type="entry name" value="ZINC_FINGER_C2H2_1"/>
    <property type="match status" value="2"/>
</dbReference>
<dbReference type="PROSITE" id="PS50157">
    <property type="entry name" value="ZINC_FINGER_C2H2_2"/>
    <property type="match status" value="2"/>
</dbReference>
<gene>
    <name evidence="5" type="primary">sebA</name>
    <name type="ORF">AFUA_4G09080</name>
</gene>
<protein>
    <recommendedName>
        <fullName evidence="6">C2H2 finger domain transcription factor sebA</fullName>
    </recommendedName>
    <alternativeName>
        <fullName evidence="6">Stress response element-binding protein A</fullName>
    </alternativeName>
</protein>
<name>SEBA_ASPFU</name>
<comment type="function">
    <text evidence="3 4">Transcription factor that is involved in the response to heat shock, oxidative stress, and poor nutrient conditions (PubMed:22345349). Controls expression of oxidative stress response genes such as ccp1, cat1, cat2, sod2; as well as of heat shock genes such as hsf1, hsp30 and hsp90 (PubMed:22345349). Negatively controls the expression of the fumiquinazoline (fmq) cluster via binding to the STRE motifs at the fmqA-D promoters (PubMed:33705521). Plays a role in virulence (PubMed:22345349, PubMed:33705521).</text>
</comment>
<comment type="subcellular location">
    <subcellularLocation>
        <location evidence="3">Nucleus</location>
    </subcellularLocation>
    <subcellularLocation>
        <location evidence="3">Cytoplasm</location>
    </subcellularLocation>
    <text evidence="3">Accumulates in the nucleus upon exposure to oxidative stress and heat shock conditions.</text>
</comment>
<comment type="disruption phenotype">
    <text evidence="3 4">Increases sensitivity calcium and to oxidative stress factors, such as paraquat and H(2)O(2) (PubMed:22345349). Leads to attenuated virulence in a murine model of invasive pulmonary aspergillosis through increased killing by the murine alveolar macrophages (PubMed:22345349). Increases the expression of the fumiquinazoline (fmq) cluster and leads to overproduction of fumiquinazoline C (PubMed:33705521).</text>
</comment>
<accession>Q4WPF5</accession>
<evidence type="ECO:0000255" key="1">
    <source>
        <dbReference type="PROSITE-ProRule" id="PRU00042"/>
    </source>
</evidence>
<evidence type="ECO:0000256" key="2">
    <source>
        <dbReference type="SAM" id="MobiDB-lite"/>
    </source>
</evidence>
<evidence type="ECO:0000269" key="3">
    <source>
    </source>
</evidence>
<evidence type="ECO:0000269" key="4">
    <source>
    </source>
</evidence>
<evidence type="ECO:0000303" key="5">
    <source>
    </source>
</evidence>
<evidence type="ECO:0000305" key="6"/>
<proteinExistence type="predicted"/>
<feature type="chain" id="PRO_0000435645" description="C2H2 finger domain transcription factor sebA">
    <location>
        <begin position="1"/>
        <end position="618"/>
    </location>
</feature>
<feature type="zinc finger region" description="C2H2-type 1" evidence="1">
    <location>
        <begin position="493"/>
        <end position="516"/>
    </location>
</feature>
<feature type="zinc finger region" description="C2H2-type 2" evidence="1">
    <location>
        <begin position="522"/>
        <end position="544"/>
    </location>
</feature>
<feature type="region of interest" description="Disordered" evidence="2">
    <location>
        <begin position="394"/>
        <end position="488"/>
    </location>
</feature>
<feature type="region of interest" description="Disordered" evidence="2">
    <location>
        <begin position="582"/>
        <end position="618"/>
    </location>
</feature>
<feature type="compositionally biased region" description="Basic residues" evidence="2">
    <location>
        <begin position="406"/>
        <end position="416"/>
    </location>
</feature>
<feature type="compositionally biased region" description="Low complexity" evidence="2">
    <location>
        <begin position="417"/>
        <end position="432"/>
    </location>
</feature>
<feature type="compositionally biased region" description="Low complexity" evidence="2">
    <location>
        <begin position="443"/>
        <end position="458"/>
    </location>
</feature>
<feature type="compositionally biased region" description="Polar residues" evidence="2">
    <location>
        <begin position="459"/>
        <end position="469"/>
    </location>
</feature>
<feature type="compositionally biased region" description="Low complexity" evidence="2">
    <location>
        <begin position="582"/>
        <end position="597"/>
    </location>
</feature>
<feature type="compositionally biased region" description="Basic residues" evidence="2">
    <location>
        <begin position="608"/>
        <end position="618"/>
    </location>
</feature>
<organism>
    <name type="scientific">Aspergillus fumigatus (strain ATCC MYA-4609 / CBS 101355 / FGSC A1100 / Af293)</name>
    <name type="common">Neosartorya fumigata</name>
    <dbReference type="NCBI Taxonomy" id="330879"/>
    <lineage>
        <taxon>Eukaryota</taxon>
        <taxon>Fungi</taxon>
        <taxon>Dikarya</taxon>
        <taxon>Ascomycota</taxon>
        <taxon>Pezizomycotina</taxon>
        <taxon>Eurotiomycetes</taxon>
        <taxon>Eurotiomycetidae</taxon>
        <taxon>Eurotiales</taxon>
        <taxon>Aspergillaceae</taxon>
        <taxon>Aspergillus</taxon>
        <taxon>Aspergillus subgen. Fumigati</taxon>
    </lineage>
</organism>
<keyword id="KW-0963">Cytoplasm</keyword>
<keyword id="KW-0479">Metal-binding</keyword>
<keyword id="KW-0539">Nucleus</keyword>
<keyword id="KW-1185">Reference proteome</keyword>
<keyword id="KW-0677">Repeat</keyword>
<keyword id="KW-0346">Stress response</keyword>
<keyword id="KW-0804">Transcription</keyword>
<keyword id="KW-0805">Transcription regulation</keyword>
<keyword id="KW-0843">Virulence</keyword>
<keyword id="KW-0862">Zinc</keyword>
<keyword id="KW-0863">Zinc-finger</keyword>
<reference key="1">
    <citation type="journal article" date="2005" name="Nature">
        <title>Genomic sequence of the pathogenic and allergenic filamentous fungus Aspergillus fumigatus.</title>
        <authorList>
            <person name="Nierman W.C."/>
            <person name="Pain A."/>
            <person name="Anderson M.J."/>
            <person name="Wortman J.R."/>
            <person name="Kim H.S."/>
            <person name="Arroyo J."/>
            <person name="Berriman M."/>
            <person name="Abe K."/>
            <person name="Archer D.B."/>
            <person name="Bermejo C."/>
            <person name="Bennett J.W."/>
            <person name="Bowyer P."/>
            <person name="Chen D."/>
            <person name="Collins M."/>
            <person name="Coulsen R."/>
            <person name="Davies R."/>
            <person name="Dyer P.S."/>
            <person name="Farman M.L."/>
            <person name="Fedorova N."/>
            <person name="Fedorova N.D."/>
            <person name="Feldblyum T.V."/>
            <person name="Fischer R."/>
            <person name="Fosker N."/>
            <person name="Fraser A."/>
            <person name="Garcia J.L."/>
            <person name="Garcia M.J."/>
            <person name="Goble A."/>
            <person name="Goldman G.H."/>
            <person name="Gomi K."/>
            <person name="Griffith-Jones S."/>
            <person name="Gwilliam R."/>
            <person name="Haas B.J."/>
            <person name="Haas H."/>
            <person name="Harris D.E."/>
            <person name="Horiuchi H."/>
            <person name="Huang J."/>
            <person name="Humphray S."/>
            <person name="Jimenez J."/>
            <person name="Keller N."/>
            <person name="Khouri H."/>
            <person name="Kitamoto K."/>
            <person name="Kobayashi T."/>
            <person name="Konzack S."/>
            <person name="Kulkarni R."/>
            <person name="Kumagai T."/>
            <person name="Lafton A."/>
            <person name="Latge J.-P."/>
            <person name="Li W."/>
            <person name="Lord A."/>
            <person name="Lu C."/>
            <person name="Majoros W.H."/>
            <person name="May G.S."/>
            <person name="Miller B.L."/>
            <person name="Mohamoud Y."/>
            <person name="Molina M."/>
            <person name="Monod M."/>
            <person name="Mouyna I."/>
            <person name="Mulligan S."/>
            <person name="Murphy L.D."/>
            <person name="O'Neil S."/>
            <person name="Paulsen I."/>
            <person name="Penalva M.A."/>
            <person name="Pertea M."/>
            <person name="Price C."/>
            <person name="Pritchard B.L."/>
            <person name="Quail M.A."/>
            <person name="Rabbinowitsch E."/>
            <person name="Rawlins N."/>
            <person name="Rajandream M.A."/>
            <person name="Reichard U."/>
            <person name="Renauld H."/>
            <person name="Robson G.D."/>
            <person name="Rodriguez de Cordoba S."/>
            <person name="Rodriguez-Pena J.M."/>
            <person name="Ronning C.M."/>
            <person name="Rutter S."/>
            <person name="Salzberg S.L."/>
            <person name="Sanchez M."/>
            <person name="Sanchez-Ferrero J.C."/>
            <person name="Saunders D."/>
            <person name="Seeger K."/>
            <person name="Squares R."/>
            <person name="Squares S."/>
            <person name="Takeuchi M."/>
            <person name="Tekaia F."/>
            <person name="Turner G."/>
            <person name="Vazquez de Aldana C.R."/>
            <person name="Weidman J."/>
            <person name="White O."/>
            <person name="Woodward J.R."/>
            <person name="Yu J.-H."/>
            <person name="Fraser C.M."/>
            <person name="Galagan J.E."/>
            <person name="Asai K."/>
            <person name="Machida M."/>
            <person name="Hall N."/>
            <person name="Barrell B.G."/>
            <person name="Denning D.W."/>
        </authorList>
    </citation>
    <scope>NUCLEOTIDE SEQUENCE [LARGE SCALE GENOMIC DNA]</scope>
    <source>
        <strain>ATCC MYA-4609 / CBS 101355 / FGSC A1100 / Af293</strain>
    </source>
</reference>
<reference key="2">
    <citation type="journal article" date="2012" name="Eukaryot. Cell">
        <title>Molecular characterization of the putative transcription factor SebA involved in virulence in Aspergillus fumigatus.</title>
        <authorList>
            <person name="Dinamarco T.M."/>
            <person name="Almeida R.S."/>
            <person name="de Castro P.A."/>
            <person name="Brown N.A."/>
            <person name="dos Reis T.F."/>
            <person name="Ramalho L.N."/>
            <person name="Savoldi M."/>
            <person name="Goldman M.H."/>
            <person name="Goldman G.H."/>
        </authorList>
    </citation>
    <scope>FUNCTION</scope>
    <scope>DISRUPTION PHENOTYPE</scope>
    <scope>SUBCELLULAR LOCATION</scope>
</reference>
<reference key="3">
    <citation type="journal article" date="2021" name="Genetics">
        <title>Transcriptional control of the production of Aspergillus fumigatus conidia-borne secondary metabolite fumiquinazoline C important for phagocytosis protection.</title>
        <authorList>
            <person name="Rocha M.C."/>
            <person name="Fabri J.H.T.M."/>
            <person name="da Silva L.P."/>
            <person name="Angolini C.F.F."/>
            <person name="Bertolini M.C."/>
            <person name="da Cunha A.F."/>
            <person name="Valiante V."/>
            <person name="Goldman G.H."/>
            <person name="Fill T.P."/>
            <person name="Malavazi I."/>
        </authorList>
    </citation>
    <scope>FUNCTION</scope>
    <scope>DISRUPTION PHENOTYPE</scope>
</reference>